<protein>
    <recommendedName>
        <fullName evidence="2">Large ribosomal subunit protein bL12m</fullName>
    </recommendedName>
</protein>
<sequence length="176" mass="18417">MSLSVRFAAQCAARQLRASTRASSSLLVQKRFESTAAPAANPKIAAIVDQISTLTLLETSELVSSLKSRLNIPDLPVGGFAAAAPAAAPAAAPAEEEEAAPAAAEKTLFTLKLEKFDAAAKPKVIKEVKNLLGLSLVESKKFVESAPKVMKESVPKEDAEKIVAAMKELGATVTMD</sequence>
<organism>
    <name type="scientific">Neurospora crassa (strain ATCC 24698 / 74-OR23-1A / CBS 708.71 / DSM 1257 / FGSC 987)</name>
    <dbReference type="NCBI Taxonomy" id="367110"/>
    <lineage>
        <taxon>Eukaryota</taxon>
        <taxon>Fungi</taxon>
        <taxon>Dikarya</taxon>
        <taxon>Ascomycota</taxon>
        <taxon>Pezizomycotina</taxon>
        <taxon>Sordariomycetes</taxon>
        <taxon>Sordariomycetidae</taxon>
        <taxon>Sordariales</taxon>
        <taxon>Sordariaceae</taxon>
        <taxon>Neurospora</taxon>
    </lineage>
</organism>
<dbReference type="EMBL" id="CM002238">
    <property type="protein sequence ID" value="EAA28124.1"/>
    <property type="molecule type" value="Genomic_DNA"/>
</dbReference>
<dbReference type="RefSeq" id="XP_957360.1">
    <property type="nucleotide sequence ID" value="XM_952267.2"/>
</dbReference>
<dbReference type="SMR" id="Q7RYV0"/>
<dbReference type="FunCoup" id="Q7RYV0">
    <property type="interactions" value="731"/>
</dbReference>
<dbReference type="STRING" id="367110.Q7RYV0"/>
<dbReference type="PaxDb" id="5141-EFNCRP00000006215"/>
<dbReference type="EnsemblFungi" id="EAA28124">
    <property type="protein sequence ID" value="EAA28124"/>
    <property type="gene ID" value="NCU06469"/>
</dbReference>
<dbReference type="GeneID" id="3873481"/>
<dbReference type="KEGG" id="ncr:NCU06469"/>
<dbReference type="VEuPathDB" id="FungiDB:NCU06469"/>
<dbReference type="HOGENOM" id="CLU_086499_0_1_1"/>
<dbReference type="InParanoid" id="Q7RYV0"/>
<dbReference type="OMA" id="LEDKWGV"/>
<dbReference type="OrthoDB" id="250175at2759"/>
<dbReference type="Proteomes" id="UP000001805">
    <property type="component" value="Chromosome 3, Linkage Group III"/>
</dbReference>
<dbReference type="GO" id="GO:0005762">
    <property type="term" value="C:mitochondrial large ribosomal subunit"/>
    <property type="evidence" value="ECO:0000318"/>
    <property type="project" value="GO_Central"/>
</dbReference>
<dbReference type="GO" id="GO:0042645">
    <property type="term" value="C:mitochondrial nucleoid"/>
    <property type="evidence" value="ECO:0007669"/>
    <property type="project" value="EnsemblFungi"/>
</dbReference>
<dbReference type="GO" id="GO:0003729">
    <property type="term" value="F:mRNA binding"/>
    <property type="evidence" value="ECO:0000318"/>
    <property type="project" value="GO_Central"/>
</dbReference>
<dbReference type="GO" id="GO:0003735">
    <property type="term" value="F:structural constituent of ribosome"/>
    <property type="evidence" value="ECO:0000318"/>
    <property type="project" value="GO_Central"/>
</dbReference>
<dbReference type="GO" id="GO:0006412">
    <property type="term" value="P:translation"/>
    <property type="evidence" value="ECO:0000318"/>
    <property type="project" value="GO_Central"/>
</dbReference>
<dbReference type="CDD" id="cd00387">
    <property type="entry name" value="Ribosomal_L7_L12"/>
    <property type="match status" value="1"/>
</dbReference>
<dbReference type="FunFam" id="3.30.1390.10:FF:000001">
    <property type="entry name" value="50S ribosomal protein L7/L12"/>
    <property type="match status" value="1"/>
</dbReference>
<dbReference type="Gene3D" id="3.30.1390.10">
    <property type="match status" value="1"/>
</dbReference>
<dbReference type="Gene3D" id="1.20.5.710">
    <property type="entry name" value="Single helix bin"/>
    <property type="match status" value="1"/>
</dbReference>
<dbReference type="HAMAP" id="MF_00368">
    <property type="entry name" value="Ribosomal_bL12"/>
    <property type="match status" value="1"/>
</dbReference>
<dbReference type="InterPro" id="IPR000206">
    <property type="entry name" value="Ribosomal_bL12"/>
</dbReference>
<dbReference type="InterPro" id="IPR013823">
    <property type="entry name" value="Ribosomal_bL12_C"/>
</dbReference>
<dbReference type="InterPro" id="IPR014719">
    <property type="entry name" value="Ribosomal_bL12_C/ClpS-like"/>
</dbReference>
<dbReference type="InterPro" id="IPR008932">
    <property type="entry name" value="Ribosomal_bL12_oligo"/>
</dbReference>
<dbReference type="InterPro" id="IPR036235">
    <property type="entry name" value="Ribosomal_bL12_oligo_N_sf"/>
</dbReference>
<dbReference type="PANTHER" id="PTHR45987">
    <property type="entry name" value="39S RIBOSOMAL PROTEIN L12"/>
    <property type="match status" value="1"/>
</dbReference>
<dbReference type="PANTHER" id="PTHR45987:SF4">
    <property type="entry name" value="LARGE RIBOSOMAL SUBUNIT PROTEIN BL12M"/>
    <property type="match status" value="1"/>
</dbReference>
<dbReference type="Pfam" id="PF00542">
    <property type="entry name" value="Ribosomal_L12"/>
    <property type="match status" value="1"/>
</dbReference>
<dbReference type="Pfam" id="PF16320">
    <property type="entry name" value="Ribosomal_L12_N"/>
    <property type="match status" value="1"/>
</dbReference>
<dbReference type="SUPFAM" id="SSF54736">
    <property type="entry name" value="ClpS-like"/>
    <property type="match status" value="1"/>
</dbReference>
<dbReference type="SUPFAM" id="SSF48300">
    <property type="entry name" value="Ribosomal protein L7/12, oligomerisation (N-terminal) domain"/>
    <property type="match status" value="1"/>
</dbReference>
<accession>Q7RYV0</accession>
<evidence type="ECO:0000269" key="1">
    <source>
    </source>
</evidence>
<evidence type="ECO:0000303" key="2">
    <source>
    </source>
</evidence>
<evidence type="ECO:0000305" key="3"/>
<evidence type="ECO:0000305" key="4">
    <source>
    </source>
</evidence>
<reference key="1">
    <citation type="journal article" date="2003" name="Nature">
        <title>The genome sequence of the filamentous fungus Neurospora crassa.</title>
        <authorList>
            <person name="Galagan J.E."/>
            <person name="Calvo S.E."/>
            <person name="Borkovich K.A."/>
            <person name="Selker E.U."/>
            <person name="Read N.D."/>
            <person name="Jaffe D.B."/>
            <person name="FitzHugh W."/>
            <person name="Ma L.-J."/>
            <person name="Smirnov S."/>
            <person name="Purcell S."/>
            <person name="Rehman B."/>
            <person name="Elkins T."/>
            <person name="Engels R."/>
            <person name="Wang S."/>
            <person name="Nielsen C.B."/>
            <person name="Butler J."/>
            <person name="Endrizzi M."/>
            <person name="Qui D."/>
            <person name="Ianakiev P."/>
            <person name="Bell-Pedersen D."/>
            <person name="Nelson M.A."/>
            <person name="Werner-Washburne M."/>
            <person name="Selitrennikoff C.P."/>
            <person name="Kinsey J.A."/>
            <person name="Braun E.L."/>
            <person name="Zelter A."/>
            <person name="Schulte U."/>
            <person name="Kothe G.O."/>
            <person name="Jedd G."/>
            <person name="Mewes H.-W."/>
            <person name="Staben C."/>
            <person name="Marcotte E."/>
            <person name="Greenberg D."/>
            <person name="Roy A."/>
            <person name="Foley K."/>
            <person name="Naylor J."/>
            <person name="Stange-Thomann N."/>
            <person name="Barrett R."/>
            <person name="Gnerre S."/>
            <person name="Kamal M."/>
            <person name="Kamvysselis M."/>
            <person name="Mauceli E.W."/>
            <person name="Bielke C."/>
            <person name="Rudd S."/>
            <person name="Frishman D."/>
            <person name="Krystofova S."/>
            <person name="Rasmussen C."/>
            <person name="Metzenberg R.L."/>
            <person name="Perkins D.D."/>
            <person name="Kroken S."/>
            <person name="Cogoni C."/>
            <person name="Macino G."/>
            <person name="Catcheside D.E.A."/>
            <person name="Li W."/>
            <person name="Pratt R.J."/>
            <person name="Osmani S.A."/>
            <person name="DeSouza C.P.C."/>
            <person name="Glass N.L."/>
            <person name="Orbach M.J."/>
            <person name="Berglund J.A."/>
            <person name="Voelker R."/>
            <person name="Yarden O."/>
            <person name="Plamann M."/>
            <person name="Seiler S."/>
            <person name="Dunlap J.C."/>
            <person name="Radford A."/>
            <person name="Aramayo R."/>
            <person name="Natvig D.O."/>
            <person name="Alex L.A."/>
            <person name="Mannhaupt G."/>
            <person name="Ebbole D.J."/>
            <person name="Freitag M."/>
            <person name="Paulsen I."/>
            <person name="Sachs M.S."/>
            <person name="Lander E.S."/>
            <person name="Nusbaum C."/>
            <person name="Birren B.W."/>
        </authorList>
    </citation>
    <scope>NUCLEOTIDE SEQUENCE [LARGE SCALE GENOMIC DNA]</scope>
    <source>
        <strain>ATCC 24698 / 74-OR23-1A / CBS 708.71 / DSM 1257 / FGSC 987</strain>
    </source>
</reference>
<reference key="2">
    <citation type="journal article" date="2020" name="Nat. Commun.">
        <title>Analysis of translating mitoribosome reveals functional characteristics of translation in mitochondria of fungi.</title>
        <authorList>
            <person name="Itoh Y."/>
            <person name="Naschberger A."/>
            <person name="Mortezaei N."/>
            <person name="Herrmann J.M."/>
            <person name="Amunts A."/>
        </authorList>
    </citation>
    <scope>IDENTIFICATION IN THE MITOCHONDRIAL RIBOSOMAL LARGE COMPLEX</scope>
    <scope>IDENTIFICATION BY MASS SPECTROMETRY</scope>
</reference>
<name>MNP1_NEUCR</name>
<feature type="chain" id="PRO_0000458608" description="Large ribosomal subunit protein bL12m">
    <location>
        <begin position="1"/>
        <end position="176"/>
    </location>
</feature>
<keyword id="KW-0496">Mitochondrion</keyword>
<keyword id="KW-1185">Reference proteome</keyword>
<keyword id="KW-0687">Ribonucleoprotein</keyword>
<keyword id="KW-0689">Ribosomal protein</keyword>
<proteinExistence type="evidence at protein level"/>
<comment type="function">
    <text evidence="4">Component of the mitochondrial ribosome (mitoribosome), a dedicated translation machinery responsible for the synthesis of mitochondrial genome-encoded proteins, including at least some of the essential transmembrane subunits of the mitochondrial respiratory chain. The mitoribosomes are attached to the mitochondrial inner membrane and translation products are cotranslationally integrated into the membrane.</text>
</comment>
<comment type="subunit">
    <text evidence="4">Component of the mitochondrial large ribosomal subunit (mt-LSU). Mature N.crassa 74S mitochondrial ribosomes consist of a small (37S) and a large (54S) subunit. The 37S small subunit contains a 16S ribosomal RNA (16S mt-rRNA) and 32 different proteins. The 54S large subunit contains a 23S rRNA (23S mt-rRNA) and 42 different proteins.</text>
</comment>
<comment type="subcellular location">
    <subcellularLocation>
        <location evidence="1">Mitochondrion</location>
    </subcellularLocation>
</comment>
<comment type="similarity">
    <text evidence="3">Belongs to the bacterial ribosomal protein bL12 family.</text>
</comment>
<gene>
    <name type="primary">mrpl12</name>
    <name type="ORF">NCU06469</name>
</gene>